<proteinExistence type="evidence at protein level"/>
<keyword id="KW-0002">3D-structure</keyword>
<keyword id="KW-0963">Cytoplasm</keyword>
<keyword id="KW-0539">Nucleus</keyword>
<keyword id="KW-1267">Proteomics identification</keyword>
<keyword id="KW-1185">Reference proteome</keyword>
<comment type="function">
    <text evidence="2 3 5 6">A-kinase anchoring protein for GSK3B and PKA that regulates or facilitates their kinase activity towards their targets (PubMed:16981698, PubMed:25920809, PubMed:27484798). The ternary complex enhances Wnt-induced signaling by facilitating the GSK3B- and PKA-induced phosphorylation of beta-catenin leading to beta-catenin degradation and stabilization respectively (PubMed:16981698, PubMed:27484798). Upon cAMP activation, the ternary complex contributes to neuroprotection against oxidative stress-induced apoptosis by facilitating the PKA-induced phosphorylation of DML1 and PKA-induced inactivation of GSK3B (PubMed:25920809). During neurite outgrowth promotes neuron proliferation; while increases beta-catenin-induced transcriptional activity through GSK3B kinase activity inhibition, reduces N-cadherin level to promote cell cycle progression (PubMed:19830702).</text>
</comment>
<comment type="subunit">
    <text evidence="2 4 5 6">Forms a complex composed of PRKAR2A or PRKAR2B, GSK3B and GSKIP through GSKIP interaction; facilitates PKA-induced phosphorylation of GSK3B leading to GSK3B inactivation; recruits DNM1L through GSK3B for PKA-mediated phosphorylation of DNM1L; promotes beta-catenin degradation through GSK3B-induced phosphorylation of beta-catenin; stabilizes beta-catenin and enhances Wnt-induced signaling through PKA-induced phosphorylation of beta-catenin (PubMed:20007971, PubMed:25920809, PubMed:27484798). Interacts with GSK3B; induces GSK3B-mediated phosphorylation of GSKIP and inhibits GSK3B kinase activity (PubMed:16981698, PubMed:25920809).</text>
</comment>
<comment type="interaction">
    <interactant intactId="EBI-1052580">
        <id>Q9P0R6</id>
    </interactant>
    <interactant intactId="EBI-1044067">
        <id>P49840</id>
        <label>GSK3A</label>
    </interactant>
    <organismsDiffer>false</organismsDiffer>
    <experiments>5</experiments>
</comment>
<comment type="subcellular location">
    <subcellularLocation>
        <location evidence="2 4">Cytoplasm</location>
    </subcellularLocation>
    <subcellularLocation>
        <location evidence="4">Nucleus</location>
    </subcellularLocation>
</comment>
<comment type="tissue specificity">
    <text evidence="2">Detected in heart, brain, placenta, liver, skeletal muscle, kidney, testis, lung and pancreas.</text>
</comment>
<comment type="PTM">
    <text evidence="2">Phosphorylated by GSK3B.</text>
</comment>
<comment type="similarity">
    <text evidence="8">Belongs to the GSKIP family.</text>
</comment>
<comment type="sequence caution" evidence="8">
    <conflict type="frameshift">
        <sequence resource="EMBL-CDS" id="AAF36130"/>
    </conflict>
</comment>
<feature type="chain" id="PRO_0000220951" description="GSK3B-interacting protein">
    <location>
        <begin position="1"/>
        <end position="139"/>
    </location>
</feature>
<feature type="region of interest" description="Disordered" evidence="1">
    <location>
        <begin position="1"/>
        <end position="22"/>
    </location>
</feature>
<feature type="region of interest" description="Required for PRKAR2A interaction; contributes to a protective effect against H(2)O(2)-induced apoptosis" evidence="5">
    <location>
        <begin position="41"/>
        <end position="45"/>
    </location>
</feature>
<feature type="region of interest" description="Interaction with GSK3B and acts as a GSK3B inhibitor" evidence="2">
    <location>
        <begin position="115"/>
        <end position="139"/>
    </location>
</feature>
<feature type="site" description="Required for GSK3B interaction; contributes to a protective effect against H(2)O(2)-induced apoptosis" evidence="2 5 6">
    <location>
        <position position="130"/>
    </location>
</feature>
<feature type="mutagenesis site" description="Abolishes interaction with PRKAR2A and PRKAR2B. Abolishes acquired resistance against oxidative stress-induced apoptosis under activated cAMP signaling. Decreases PKA-mediated DNM1L phosphorylation." evidence="5">
    <original>VNDVL</original>
    <variation>PNDVP</variation>
    <location>
        <begin position="41"/>
        <end position="45"/>
    </location>
</feature>
<feature type="mutagenesis site" description="Abolishes interaction with PRKAR2A. Prevents the Wnt-induced transcription. Does not alter the phosphorylation of CTNNB1 in the presence of Wnt." evidence="6">
    <original>N</original>
    <variation>I</variation>
    <location>
        <position position="42"/>
    </location>
</feature>
<feature type="mutagenesis site" description="No effect on GSK3B-mediated phosphorylation. Reduces to 30 % GSK3B-mediated phosphorylation; when associated with A-113. Reduces to 30 % GSK3B-mediated phosphorylation; when associated with A-113 and A-115." evidence="2">
    <original>S</original>
    <variation>A</variation>
    <location>
        <position position="109"/>
    </location>
</feature>
<feature type="mutagenesis site" description="No effect on GSK3B-mediated phosphorylation. Reduces to 30 % GSK3B-mediated phosphorylation; when associated with A-109. Reduces to 30 % GSK3B-mediated phosphorylation; when associated with A-113 and A-115." evidence="2">
    <original>T</original>
    <variation>A</variation>
    <location>
        <position position="113"/>
    </location>
</feature>
<feature type="mutagenesis site" description="No effect on GSK3B-mediated phosphorylation. Reduces to 30 % GSK3B-mediated phosphorylation; when associated with A-109. Reduces to 30 % GSK3B-mediated phosphorylation; when associated with A109 and A-113." evidence="2">
    <original>S</original>
    <variation>A</variation>
    <location>
        <position position="115"/>
    </location>
</feature>
<feature type="mutagenesis site" description="Loss of interaction with GSK3B. Abolishes GSK3B-mediated phosphorylation. Prevents beta-catenin accumulation in the cytoplasm and nucleus. Prevents the Wnt-induced transcription. Decreases PKA-mediated phosphorylation of GSK3B. Abolishes acquired resistance against oxidative stress-induced apoptosis under activated cAMP signaling. Decreases PKA-mediated DNM1L phosphorylation." evidence="2 5 6">
    <original>L</original>
    <variation>P</variation>
    <location>
        <position position="130"/>
    </location>
</feature>
<feature type="sequence conflict" description="In Ref. 2; BAA91380." evidence="8" ref="2">
    <original>F</original>
    <variation>S</variation>
    <location>
        <position position="46"/>
    </location>
</feature>
<feature type="strand" evidence="10">
    <location>
        <begin position="10"/>
        <end position="13"/>
    </location>
</feature>
<feature type="helix" evidence="10">
    <location>
        <begin position="33"/>
        <end position="44"/>
    </location>
</feature>
<feature type="helix" evidence="10">
    <location>
        <begin position="45"/>
        <end position="47"/>
    </location>
</feature>
<feature type="strand" evidence="10">
    <location>
        <begin position="48"/>
        <end position="53"/>
    </location>
</feature>
<feature type="strand" evidence="10">
    <location>
        <begin position="63"/>
        <end position="69"/>
    </location>
</feature>
<feature type="strand" evidence="10">
    <location>
        <begin position="75"/>
        <end position="81"/>
    </location>
</feature>
<feature type="strand" evidence="10">
    <location>
        <begin position="84"/>
        <end position="91"/>
    </location>
</feature>
<feature type="strand" evidence="10">
    <location>
        <begin position="103"/>
        <end position="107"/>
    </location>
</feature>
<feature type="helix" evidence="10">
    <location>
        <begin position="108"/>
        <end position="114"/>
    </location>
</feature>
<feature type="helix" evidence="10">
    <location>
        <begin position="116"/>
        <end position="135"/>
    </location>
</feature>
<gene>
    <name evidence="7 9" type="primary">GSKIP</name>
    <name evidence="9" type="synonym">C14orf129</name>
    <name type="ORF">HSPC210</name>
</gene>
<reference key="1">
    <citation type="journal article" date="2000" name="Genome Res.">
        <title>Cloning and functional analysis of cDNAs with open reading frames for 300 previously undefined genes expressed in CD34+ hematopoietic stem/progenitor cells.</title>
        <authorList>
            <person name="Zhang Q.-H."/>
            <person name="Ye M."/>
            <person name="Wu X.-Y."/>
            <person name="Ren S.-X."/>
            <person name="Zhao M."/>
            <person name="Zhao C.-J."/>
            <person name="Fu G."/>
            <person name="Shen Y."/>
            <person name="Fan H.-Y."/>
            <person name="Lu G."/>
            <person name="Zhong M."/>
            <person name="Xu X.-R."/>
            <person name="Han Z.-G."/>
            <person name="Zhang J.-W."/>
            <person name="Tao J."/>
            <person name="Huang Q.-H."/>
            <person name="Zhou J."/>
            <person name="Hu G.-X."/>
            <person name="Gu J."/>
            <person name="Chen S.-J."/>
            <person name="Chen Z."/>
        </authorList>
    </citation>
    <scope>NUCLEOTIDE SEQUENCE [LARGE SCALE MRNA]</scope>
    <source>
        <tissue>Umbilical cord blood</tissue>
    </source>
</reference>
<reference key="2">
    <citation type="journal article" date="2004" name="Nat. Genet.">
        <title>Complete sequencing and characterization of 21,243 full-length human cDNAs.</title>
        <authorList>
            <person name="Ota T."/>
            <person name="Suzuki Y."/>
            <person name="Nishikawa T."/>
            <person name="Otsuki T."/>
            <person name="Sugiyama T."/>
            <person name="Irie R."/>
            <person name="Wakamatsu A."/>
            <person name="Hayashi K."/>
            <person name="Sato H."/>
            <person name="Nagai K."/>
            <person name="Kimura K."/>
            <person name="Makita H."/>
            <person name="Sekine M."/>
            <person name="Obayashi M."/>
            <person name="Nishi T."/>
            <person name="Shibahara T."/>
            <person name="Tanaka T."/>
            <person name="Ishii S."/>
            <person name="Yamamoto J."/>
            <person name="Saito K."/>
            <person name="Kawai Y."/>
            <person name="Isono Y."/>
            <person name="Nakamura Y."/>
            <person name="Nagahari K."/>
            <person name="Murakami K."/>
            <person name="Yasuda T."/>
            <person name="Iwayanagi T."/>
            <person name="Wagatsuma M."/>
            <person name="Shiratori A."/>
            <person name="Sudo H."/>
            <person name="Hosoiri T."/>
            <person name="Kaku Y."/>
            <person name="Kodaira H."/>
            <person name="Kondo H."/>
            <person name="Sugawara M."/>
            <person name="Takahashi M."/>
            <person name="Kanda K."/>
            <person name="Yokoi T."/>
            <person name="Furuya T."/>
            <person name="Kikkawa E."/>
            <person name="Omura Y."/>
            <person name="Abe K."/>
            <person name="Kamihara K."/>
            <person name="Katsuta N."/>
            <person name="Sato K."/>
            <person name="Tanikawa M."/>
            <person name="Yamazaki M."/>
            <person name="Ninomiya K."/>
            <person name="Ishibashi T."/>
            <person name="Yamashita H."/>
            <person name="Murakawa K."/>
            <person name="Fujimori K."/>
            <person name="Tanai H."/>
            <person name="Kimata M."/>
            <person name="Watanabe M."/>
            <person name="Hiraoka S."/>
            <person name="Chiba Y."/>
            <person name="Ishida S."/>
            <person name="Ono Y."/>
            <person name="Takiguchi S."/>
            <person name="Watanabe S."/>
            <person name="Yosida M."/>
            <person name="Hotuta T."/>
            <person name="Kusano J."/>
            <person name="Kanehori K."/>
            <person name="Takahashi-Fujii A."/>
            <person name="Hara H."/>
            <person name="Tanase T.-O."/>
            <person name="Nomura Y."/>
            <person name="Togiya S."/>
            <person name="Komai F."/>
            <person name="Hara R."/>
            <person name="Takeuchi K."/>
            <person name="Arita M."/>
            <person name="Imose N."/>
            <person name="Musashino K."/>
            <person name="Yuuki H."/>
            <person name="Oshima A."/>
            <person name="Sasaki N."/>
            <person name="Aotsuka S."/>
            <person name="Yoshikawa Y."/>
            <person name="Matsunawa H."/>
            <person name="Ichihara T."/>
            <person name="Shiohata N."/>
            <person name="Sano S."/>
            <person name="Moriya S."/>
            <person name="Momiyama H."/>
            <person name="Satoh N."/>
            <person name="Takami S."/>
            <person name="Terashima Y."/>
            <person name="Suzuki O."/>
            <person name="Nakagawa S."/>
            <person name="Senoh A."/>
            <person name="Mizoguchi H."/>
            <person name="Goto Y."/>
            <person name="Shimizu F."/>
            <person name="Wakebe H."/>
            <person name="Hishigaki H."/>
            <person name="Watanabe T."/>
            <person name="Sugiyama A."/>
            <person name="Takemoto M."/>
            <person name="Kawakami B."/>
            <person name="Yamazaki M."/>
            <person name="Watanabe K."/>
            <person name="Kumagai A."/>
            <person name="Itakura S."/>
            <person name="Fukuzumi Y."/>
            <person name="Fujimori Y."/>
            <person name="Komiyama M."/>
            <person name="Tashiro H."/>
            <person name="Tanigami A."/>
            <person name="Fujiwara T."/>
            <person name="Ono T."/>
            <person name="Yamada K."/>
            <person name="Fujii Y."/>
            <person name="Ozaki K."/>
            <person name="Hirao M."/>
            <person name="Ohmori Y."/>
            <person name="Kawabata A."/>
            <person name="Hikiji T."/>
            <person name="Kobatake N."/>
            <person name="Inagaki H."/>
            <person name="Ikema Y."/>
            <person name="Okamoto S."/>
            <person name="Okitani R."/>
            <person name="Kawakami T."/>
            <person name="Noguchi S."/>
            <person name="Itoh T."/>
            <person name="Shigeta K."/>
            <person name="Senba T."/>
            <person name="Matsumura K."/>
            <person name="Nakajima Y."/>
            <person name="Mizuno T."/>
            <person name="Morinaga M."/>
            <person name="Sasaki M."/>
            <person name="Togashi T."/>
            <person name="Oyama M."/>
            <person name="Hata H."/>
            <person name="Watanabe M."/>
            <person name="Komatsu T."/>
            <person name="Mizushima-Sugano J."/>
            <person name="Satoh T."/>
            <person name="Shirai Y."/>
            <person name="Takahashi Y."/>
            <person name="Nakagawa K."/>
            <person name="Okumura K."/>
            <person name="Nagase T."/>
            <person name="Nomura N."/>
            <person name="Kikuchi H."/>
            <person name="Masuho Y."/>
            <person name="Yamashita R."/>
            <person name="Nakai K."/>
            <person name="Yada T."/>
            <person name="Nakamura Y."/>
            <person name="Ohara O."/>
            <person name="Isogai T."/>
            <person name="Sugano S."/>
        </authorList>
    </citation>
    <scope>NUCLEOTIDE SEQUENCE [LARGE SCALE MRNA]</scope>
    <source>
        <tissue>Amygdala</tissue>
        <tissue>Colon</tissue>
    </source>
</reference>
<reference key="3">
    <citation type="journal article" date="2003" name="Nature">
        <title>The DNA sequence and analysis of human chromosome 14.</title>
        <authorList>
            <person name="Heilig R."/>
            <person name="Eckenberg R."/>
            <person name="Petit J.-L."/>
            <person name="Fonknechten N."/>
            <person name="Da Silva C."/>
            <person name="Cattolico L."/>
            <person name="Levy M."/>
            <person name="Barbe V."/>
            <person name="De Berardinis V."/>
            <person name="Ureta-Vidal A."/>
            <person name="Pelletier E."/>
            <person name="Vico V."/>
            <person name="Anthouard V."/>
            <person name="Rowen L."/>
            <person name="Madan A."/>
            <person name="Qin S."/>
            <person name="Sun H."/>
            <person name="Du H."/>
            <person name="Pepin K."/>
            <person name="Artiguenave F."/>
            <person name="Robert C."/>
            <person name="Cruaud C."/>
            <person name="Bruels T."/>
            <person name="Jaillon O."/>
            <person name="Friedlander L."/>
            <person name="Samson G."/>
            <person name="Brottier P."/>
            <person name="Cure S."/>
            <person name="Segurens B."/>
            <person name="Aniere F."/>
            <person name="Samain S."/>
            <person name="Crespeau H."/>
            <person name="Abbasi N."/>
            <person name="Aiach N."/>
            <person name="Boscus D."/>
            <person name="Dickhoff R."/>
            <person name="Dors M."/>
            <person name="Dubois I."/>
            <person name="Friedman C."/>
            <person name="Gouyvenoux M."/>
            <person name="James R."/>
            <person name="Madan A."/>
            <person name="Mairey-Estrada B."/>
            <person name="Mangenot S."/>
            <person name="Martins N."/>
            <person name="Menard M."/>
            <person name="Oztas S."/>
            <person name="Ratcliffe A."/>
            <person name="Shaffer T."/>
            <person name="Trask B."/>
            <person name="Vacherie B."/>
            <person name="Bellemere C."/>
            <person name="Belser C."/>
            <person name="Besnard-Gonnet M."/>
            <person name="Bartol-Mavel D."/>
            <person name="Boutard M."/>
            <person name="Briez-Silla S."/>
            <person name="Combette S."/>
            <person name="Dufosse-Laurent V."/>
            <person name="Ferron C."/>
            <person name="Lechaplais C."/>
            <person name="Louesse C."/>
            <person name="Muselet D."/>
            <person name="Magdelenat G."/>
            <person name="Pateau E."/>
            <person name="Petit E."/>
            <person name="Sirvain-Trukniewicz P."/>
            <person name="Trybou A."/>
            <person name="Vega-Czarny N."/>
            <person name="Bataille E."/>
            <person name="Bluet E."/>
            <person name="Bordelais I."/>
            <person name="Dubois M."/>
            <person name="Dumont C."/>
            <person name="Guerin T."/>
            <person name="Haffray S."/>
            <person name="Hammadi R."/>
            <person name="Muanga J."/>
            <person name="Pellouin V."/>
            <person name="Robert D."/>
            <person name="Wunderle E."/>
            <person name="Gauguet G."/>
            <person name="Roy A."/>
            <person name="Sainte-Marthe L."/>
            <person name="Verdier J."/>
            <person name="Verdier-Discala C."/>
            <person name="Hillier L.W."/>
            <person name="Fulton L."/>
            <person name="McPherson J."/>
            <person name="Matsuda F."/>
            <person name="Wilson R."/>
            <person name="Scarpelli C."/>
            <person name="Gyapay G."/>
            <person name="Wincker P."/>
            <person name="Saurin W."/>
            <person name="Quetier F."/>
            <person name="Waterston R."/>
            <person name="Hood L."/>
            <person name="Weissenbach J."/>
        </authorList>
    </citation>
    <scope>NUCLEOTIDE SEQUENCE [LARGE SCALE GENOMIC DNA]</scope>
</reference>
<reference key="4">
    <citation type="submission" date="2005-07" db="EMBL/GenBank/DDBJ databases">
        <authorList>
            <person name="Mural R.J."/>
            <person name="Istrail S."/>
            <person name="Sutton G.G."/>
            <person name="Florea L."/>
            <person name="Halpern A.L."/>
            <person name="Mobarry C.M."/>
            <person name="Lippert R."/>
            <person name="Walenz B."/>
            <person name="Shatkay H."/>
            <person name="Dew I."/>
            <person name="Miller J.R."/>
            <person name="Flanigan M.J."/>
            <person name="Edwards N.J."/>
            <person name="Bolanos R."/>
            <person name="Fasulo D."/>
            <person name="Halldorsson B.V."/>
            <person name="Hannenhalli S."/>
            <person name="Turner R."/>
            <person name="Yooseph S."/>
            <person name="Lu F."/>
            <person name="Nusskern D.R."/>
            <person name="Shue B.C."/>
            <person name="Zheng X.H."/>
            <person name="Zhong F."/>
            <person name="Delcher A.L."/>
            <person name="Huson D.H."/>
            <person name="Kravitz S.A."/>
            <person name="Mouchard L."/>
            <person name="Reinert K."/>
            <person name="Remington K.A."/>
            <person name="Clark A.G."/>
            <person name="Waterman M.S."/>
            <person name="Eichler E.E."/>
            <person name="Adams M.D."/>
            <person name="Hunkapiller M.W."/>
            <person name="Myers E.W."/>
            <person name="Venter J.C."/>
        </authorList>
    </citation>
    <scope>NUCLEOTIDE SEQUENCE [LARGE SCALE GENOMIC DNA]</scope>
</reference>
<reference key="5">
    <citation type="journal article" date="2004" name="Genome Res.">
        <title>The status, quality, and expansion of the NIH full-length cDNA project: the Mammalian Gene Collection (MGC).</title>
        <authorList>
            <consortium name="The MGC Project Team"/>
        </authorList>
    </citation>
    <scope>NUCLEOTIDE SEQUENCE [LARGE SCALE MRNA]</scope>
    <source>
        <tissue>Placenta</tissue>
    </source>
</reference>
<reference key="6">
    <citation type="journal article" date="2006" name="Biochemistry">
        <title>GSKIP is homologous to the axin GSK3beta interaction domain and functions as a negative regulator of GSK3beta.</title>
        <authorList>
            <person name="Chou H.-Y."/>
            <person name="Howng S.-L."/>
            <person name="Cheng T.-S."/>
            <person name="Hsiao Y.-L."/>
            <person name="Lieu A.-S."/>
            <person name="Loh J.-K."/>
            <person name="Hwang S.-L."/>
            <person name="Lin C.-C."/>
            <person name="Hsu C.-M."/>
            <person name="Wang C."/>
            <person name="Lee C.-I."/>
            <person name="Lu P.-J."/>
            <person name="Chou C.-K."/>
            <person name="Huang C.-Y."/>
            <person name="Hong Y.-R."/>
        </authorList>
    </citation>
    <scope>INTERACTION WITH GSK3B</scope>
    <scope>SUBCELLULAR LOCATION</scope>
    <scope>MUTAGENESIS OF SER-109; THR-113; SER-115 AND LEU-130</scope>
    <scope>TISSUE SPECIFICITY</scope>
    <scope>FUNCTION</scope>
    <scope>REGION</scope>
</reference>
<reference key="7">
    <citation type="journal article" date="2009" name="J. Cell. Biochem.">
        <title>GSKIP, an inhibitor of GSK3beta, mediates the N-cadherin/beta-catenin pool in the differentiation of SH-SY5Y cells.</title>
        <authorList>
            <person name="Lin C.C."/>
            <person name="Chou C.H."/>
            <person name="Howng S.L."/>
            <person name="Hsu C.Y."/>
            <person name="Hwang C.C."/>
            <person name="Wang C."/>
            <person name="Hsu C.M."/>
            <person name="Hong Y.R."/>
        </authorList>
    </citation>
    <scope>FUNCTION</scope>
</reference>
<reference key="8">
    <citation type="journal article" date="2010" name="J. Biol. Chem.">
        <title>Glycogen synthase kinase 3beta interaction protein functions as an A-kinase anchoring protein.</title>
        <authorList>
            <person name="Hundsrucker C."/>
            <person name="Skroblin P."/>
            <person name="Christian F."/>
            <person name="Zenn H.M."/>
            <person name="Popara V."/>
            <person name="Joshi M."/>
            <person name="Eichhorst J."/>
            <person name="Wiesner B."/>
            <person name="Herberg F.W."/>
            <person name="Reif B."/>
            <person name="Rosenthal W."/>
            <person name="Klussmann E."/>
        </authorList>
    </citation>
    <scope>IDENTIFICATION BY MASS SPECTROMETRY</scope>
    <scope>INTERACTION WITH PRKAR2A; PRKAR2B AND GSK3B</scope>
    <scope>SUBCELLULAR LOCATION</scope>
</reference>
<reference key="9">
    <citation type="journal article" date="2015" name="Biochim. Biophys. Acta">
        <title>GSKIP- and GSK3-mediated anchoring strengthens cAMP/PKA/Drp1 axis signaling in the regulation of mitochondrial elongation.</title>
        <authorList>
            <person name="Loh J.K."/>
            <person name="Lin C.C."/>
            <person name="Yang M.C."/>
            <person name="Chou C.H."/>
            <person name="Chen W.S."/>
            <person name="Hong M.C."/>
            <person name="Cho C.L."/>
            <person name="Hsu C.M."/>
            <person name="Cheng J.T."/>
            <person name="Chou A.K."/>
            <person name="Chang C.H."/>
            <person name="Tseng C.N."/>
            <person name="Wang C.H."/>
            <person name="Lieu A.S."/>
            <person name="Howng S.L."/>
            <person name="Hong Y.R."/>
        </authorList>
    </citation>
    <scope>INTERACTION WITH PRKAR2B AND GSK3B</scope>
    <scope>MUTAGENESIS OF 41-VAL--LEU-45 AND LEU-130</scope>
    <scope>FUNCTION</scope>
    <scope>REGION</scope>
</reference>
<reference key="10">
    <citation type="journal article" date="2016" name="J. Biol. Chem.">
        <title>The A-Kinase Anchoring Protein (AKAP) Glycogen Synthase Kinase 3beta Interaction Protein (GSKIP) Regulates beta-Catenin through Its Interactions with Both Protein Kinase A (PKA) and GSK3beta.</title>
        <authorList>
            <person name="Dema A."/>
            <person name="Schroeter M.F."/>
            <person name="Perets E."/>
            <person name="Skroblin P."/>
            <person name="Moutty M.C."/>
            <person name="Deak V.A."/>
            <person name="Birchmeier W."/>
            <person name="Klussmann E."/>
        </authorList>
    </citation>
    <scope>FUNCTION</scope>
    <scope>MUTAGENESIS OF ASN-42 AND LEU-130</scope>
    <scope>INTERACTION WITH PRKAR2A AND GSK3B</scope>
</reference>
<reference key="11">
    <citation type="submission" date="2005-01" db="PDB data bank">
        <title>NMR structure of the human C14orf129 gene product, HSPC210. Northeast structural genomics target HR969.</title>
        <authorList>
            <consortium name="Northeast structural genomics consortium (NESG)"/>
        </authorList>
    </citation>
    <scope>STRUCTURE BY NMR</scope>
</reference>
<evidence type="ECO:0000256" key="1">
    <source>
        <dbReference type="SAM" id="MobiDB-lite"/>
    </source>
</evidence>
<evidence type="ECO:0000269" key="2">
    <source>
    </source>
</evidence>
<evidence type="ECO:0000269" key="3">
    <source>
    </source>
</evidence>
<evidence type="ECO:0000269" key="4">
    <source>
    </source>
</evidence>
<evidence type="ECO:0000269" key="5">
    <source>
    </source>
</evidence>
<evidence type="ECO:0000269" key="6">
    <source>
    </source>
</evidence>
<evidence type="ECO:0000303" key="7">
    <source>
    </source>
</evidence>
<evidence type="ECO:0000305" key="8"/>
<evidence type="ECO:0000312" key="9">
    <source>
        <dbReference type="HGNC" id="HGNC:20343"/>
    </source>
</evidence>
<evidence type="ECO:0007829" key="10">
    <source>
        <dbReference type="PDB" id="1SGO"/>
    </source>
</evidence>
<dbReference type="EMBL" id="AF151044">
    <property type="protein sequence ID" value="AAF36130.1"/>
    <property type="status" value="ALT_FRAME"/>
    <property type="molecule type" value="mRNA"/>
</dbReference>
<dbReference type="EMBL" id="AK000796">
    <property type="protein sequence ID" value="BAA91380.1"/>
    <property type="molecule type" value="mRNA"/>
</dbReference>
<dbReference type="EMBL" id="AK094654">
    <property type="protein sequence ID" value="BAG52902.1"/>
    <property type="molecule type" value="mRNA"/>
</dbReference>
<dbReference type="EMBL" id="AL359240">
    <property type="status" value="NOT_ANNOTATED_CDS"/>
    <property type="molecule type" value="Genomic_DNA"/>
</dbReference>
<dbReference type="EMBL" id="CH471061">
    <property type="protein sequence ID" value="EAW81634.1"/>
    <property type="molecule type" value="Genomic_DNA"/>
</dbReference>
<dbReference type="EMBL" id="BC004818">
    <property type="protein sequence ID" value="AAH04818.1"/>
    <property type="molecule type" value="mRNA"/>
</dbReference>
<dbReference type="CCDS" id="CCDS32153.1"/>
<dbReference type="RefSeq" id="NP_001258833.1">
    <property type="nucleotide sequence ID" value="NM_001271904.1"/>
</dbReference>
<dbReference type="RefSeq" id="NP_001258834.1">
    <property type="nucleotide sequence ID" value="NM_001271905.2"/>
</dbReference>
<dbReference type="RefSeq" id="NP_001258835.1">
    <property type="nucleotide sequence ID" value="NM_001271906.2"/>
</dbReference>
<dbReference type="RefSeq" id="NP_057556.2">
    <property type="nucleotide sequence ID" value="NM_016472.5"/>
</dbReference>
<dbReference type="RefSeq" id="XP_016876854.1">
    <property type="nucleotide sequence ID" value="XM_017021365.1"/>
</dbReference>
<dbReference type="PDB" id="1SGO">
    <property type="method" value="NMR"/>
    <property type="chains" value="A=1-139"/>
</dbReference>
<dbReference type="PDBsum" id="1SGO"/>
<dbReference type="BMRB" id="Q9P0R6"/>
<dbReference type="SMR" id="Q9P0R6"/>
<dbReference type="BioGRID" id="119589">
    <property type="interactions" value="21"/>
</dbReference>
<dbReference type="CORUM" id="Q9P0R6"/>
<dbReference type="FunCoup" id="Q9P0R6">
    <property type="interactions" value="2902"/>
</dbReference>
<dbReference type="IntAct" id="Q9P0R6">
    <property type="interactions" value="17"/>
</dbReference>
<dbReference type="MINT" id="Q9P0R6"/>
<dbReference type="STRING" id="9606.ENSP00000451188"/>
<dbReference type="BioMuta" id="GSKIP"/>
<dbReference type="DMDM" id="34582343"/>
<dbReference type="jPOST" id="Q9P0R6"/>
<dbReference type="MassIVE" id="Q9P0R6"/>
<dbReference type="PaxDb" id="9606-ENSP00000451188"/>
<dbReference type="PeptideAtlas" id="Q9P0R6"/>
<dbReference type="ProteomicsDB" id="83591"/>
<dbReference type="Pumba" id="Q9P0R6"/>
<dbReference type="Antibodypedia" id="27335">
    <property type="antibodies" value="85 antibodies from 17 providers"/>
</dbReference>
<dbReference type="DNASU" id="51527"/>
<dbReference type="Ensembl" id="ENST00000438650.5">
    <property type="protein sequence ID" value="ENSP00000412315.1"/>
    <property type="gene ID" value="ENSG00000100744.15"/>
</dbReference>
<dbReference type="Ensembl" id="ENST00000554182.5">
    <property type="protein sequence ID" value="ENSP00000451384.1"/>
    <property type="gene ID" value="ENSG00000100744.15"/>
</dbReference>
<dbReference type="Ensembl" id="ENST00000555181.6">
    <property type="protein sequence ID" value="ENSP00000450420.1"/>
    <property type="gene ID" value="ENSG00000100744.15"/>
</dbReference>
<dbReference type="Ensembl" id="ENST00000556095.5">
    <property type="protein sequence ID" value="ENSP00000451188.1"/>
    <property type="gene ID" value="ENSG00000100744.15"/>
</dbReference>
<dbReference type="GeneID" id="51527"/>
<dbReference type="KEGG" id="hsa:51527"/>
<dbReference type="MANE-Select" id="ENST00000555181.6">
    <property type="protein sequence ID" value="ENSP00000450420.1"/>
    <property type="RefSeq nucleotide sequence ID" value="NM_016472.5"/>
    <property type="RefSeq protein sequence ID" value="NP_057556.2"/>
</dbReference>
<dbReference type="UCSC" id="uc001yfj.6">
    <property type="organism name" value="human"/>
</dbReference>
<dbReference type="AGR" id="HGNC:20343"/>
<dbReference type="CTD" id="51527"/>
<dbReference type="DisGeNET" id="51527"/>
<dbReference type="GeneCards" id="GSKIP"/>
<dbReference type="HGNC" id="HGNC:20343">
    <property type="gene designation" value="GSKIP"/>
</dbReference>
<dbReference type="HPA" id="ENSG00000100744">
    <property type="expression patterns" value="Low tissue specificity"/>
</dbReference>
<dbReference type="MalaCards" id="GSKIP"/>
<dbReference type="MIM" id="616605">
    <property type="type" value="gene"/>
</dbReference>
<dbReference type="neXtProt" id="NX_Q9P0R6"/>
<dbReference type="OpenTargets" id="ENSG00000100744"/>
<dbReference type="PharmGKB" id="PA134987554"/>
<dbReference type="VEuPathDB" id="HostDB:ENSG00000100744"/>
<dbReference type="eggNOG" id="KOG3965">
    <property type="taxonomic scope" value="Eukaryota"/>
</dbReference>
<dbReference type="GeneTree" id="ENSGT00390000009517"/>
<dbReference type="HOGENOM" id="CLU_143747_0_0_1"/>
<dbReference type="InParanoid" id="Q9P0R6"/>
<dbReference type="OMA" id="FAVTEMH"/>
<dbReference type="OrthoDB" id="5804279at2759"/>
<dbReference type="PAN-GO" id="Q9P0R6">
    <property type="GO annotations" value="4 GO annotations based on evolutionary models"/>
</dbReference>
<dbReference type="PhylomeDB" id="Q9P0R6"/>
<dbReference type="TreeFam" id="TF313906"/>
<dbReference type="PathwayCommons" id="Q9P0R6"/>
<dbReference type="SignaLink" id="Q9P0R6"/>
<dbReference type="BioGRID-ORCS" id="51527">
    <property type="hits" value="17 hits in 1159 CRISPR screens"/>
</dbReference>
<dbReference type="EvolutionaryTrace" id="Q9P0R6"/>
<dbReference type="GenomeRNAi" id="51527"/>
<dbReference type="Pharos" id="Q9P0R6">
    <property type="development level" value="Tbio"/>
</dbReference>
<dbReference type="PRO" id="PR:Q9P0R6"/>
<dbReference type="Proteomes" id="UP000005640">
    <property type="component" value="Chromosome 14"/>
</dbReference>
<dbReference type="RNAct" id="Q9P0R6">
    <property type="molecule type" value="protein"/>
</dbReference>
<dbReference type="Bgee" id="ENSG00000100744">
    <property type="expression patterns" value="Expressed in secondary oocyte and 188 other cell types or tissues"/>
</dbReference>
<dbReference type="ExpressionAtlas" id="Q9P0R6">
    <property type="expression patterns" value="baseline and differential"/>
</dbReference>
<dbReference type="GO" id="GO:0005737">
    <property type="term" value="C:cytoplasm"/>
    <property type="evidence" value="ECO:0000314"/>
    <property type="project" value="UniProtKB"/>
</dbReference>
<dbReference type="GO" id="GO:0005634">
    <property type="term" value="C:nucleus"/>
    <property type="evidence" value="ECO:0000314"/>
    <property type="project" value="UniProtKB"/>
</dbReference>
<dbReference type="GO" id="GO:0019207">
    <property type="term" value="F:kinase regulator activity"/>
    <property type="evidence" value="ECO:0000318"/>
    <property type="project" value="GO_Central"/>
</dbReference>
<dbReference type="GO" id="GO:0051018">
    <property type="term" value="F:protein kinase A binding"/>
    <property type="evidence" value="ECO:0000353"/>
    <property type="project" value="UniProtKB"/>
</dbReference>
<dbReference type="GO" id="GO:0034237">
    <property type="term" value="F:protein kinase A regulatory subunit binding"/>
    <property type="evidence" value="ECO:0000353"/>
    <property type="project" value="UniProtKB"/>
</dbReference>
<dbReference type="GO" id="GO:0019901">
    <property type="term" value="F:protein kinase binding"/>
    <property type="evidence" value="ECO:0000353"/>
    <property type="project" value="UniProtKB"/>
</dbReference>
<dbReference type="GO" id="GO:0004860">
    <property type="term" value="F:protein kinase inhibitor activity"/>
    <property type="evidence" value="ECO:0000314"/>
    <property type="project" value="UniProtKB"/>
</dbReference>
<dbReference type="GO" id="GO:0008631">
    <property type="term" value="P:intrinsic apoptotic signaling pathway in response to oxidative stress"/>
    <property type="evidence" value="ECO:0000315"/>
    <property type="project" value="UniProtKB"/>
</dbReference>
<dbReference type="GO" id="GO:0006469">
    <property type="term" value="P:negative regulation of protein kinase activity"/>
    <property type="evidence" value="ECO:0000315"/>
    <property type="project" value="UniProtKB"/>
</dbReference>
<dbReference type="GO" id="GO:0090263">
    <property type="term" value="P:positive regulation of canonical Wnt signaling pathway"/>
    <property type="evidence" value="ECO:0000314"/>
    <property type="project" value="UniProtKB"/>
</dbReference>
<dbReference type="GO" id="GO:0030111">
    <property type="term" value="P:regulation of Wnt signaling pathway"/>
    <property type="evidence" value="ECO:0000315"/>
    <property type="project" value="UniProtKB"/>
</dbReference>
<dbReference type="FunFam" id="3.30.2280.10:FF:000003">
    <property type="entry name" value="GSK3-beta interaction protein"/>
    <property type="match status" value="1"/>
</dbReference>
<dbReference type="Gene3D" id="3.30.2280.10">
    <property type="entry name" value="Hypothetical protein (hspc210)"/>
    <property type="match status" value="1"/>
</dbReference>
<dbReference type="InterPro" id="IPR037395">
    <property type="entry name" value="GSKIP"/>
</dbReference>
<dbReference type="InterPro" id="IPR007967">
    <property type="entry name" value="GSKIP_dom"/>
</dbReference>
<dbReference type="InterPro" id="IPR023231">
    <property type="entry name" value="GSKIP_dom_sf"/>
</dbReference>
<dbReference type="PANTHER" id="PTHR12490">
    <property type="entry name" value="GSK3B-INTERACTING PROTEIN"/>
    <property type="match status" value="1"/>
</dbReference>
<dbReference type="PANTHER" id="PTHR12490:SF4">
    <property type="entry name" value="GSK3B-INTERACTING PROTEIN"/>
    <property type="match status" value="1"/>
</dbReference>
<dbReference type="Pfam" id="PF05303">
    <property type="entry name" value="GSKIP_dom"/>
    <property type="match status" value="1"/>
</dbReference>
<dbReference type="SUPFAM" id="SSF103107">
    <property type="entry name" value="Hypothetical protein c14orf129, hspc210"/>
    <property type="match status" value="1"/>
</dbReference>
<protein>
    <recommendedName>
        <fullName evidence="9">GSK3B-interacting protein</fullName>
        <shortName evidence="7">GSKIP</shortName>
    </recommendedName>
    <alternativeName>
        <fullName evidence="9">GSK3beta interaction protein</fullName>
    </alternativeName>
</protein>
<accession>Q9P0R6</accession>
<accession>B3KSZ0</accession>
<accession>Q9BST1</accession>
<accession>Q9NWK0</accession>
<organism>
    <name type="scientific">Homo sapiens</name>
    <name type="common">Human</name>
    <dbReference type="NCBI Taxonomy" id="9606"/>
    <lineage>
        <taxon>Eukaryota</taxon>
        <taxon>Metazoa</taxon>
        <taxon>Chordata</taxon>
        <taxon>Craniata</taxon>
        <taxon>Vertebrata</taxon>
        <taxon>Euteleostomi</taxon>
        <taxon>Mammalia</taxon>
        <taxon>Eutheria</taxon>
        <taxon>Euarchontoglires</taxon>
        <taxon>Primates</taxon>
        <taxon>Haplorrhini</taxon>
        <taxon>Catarrhini</taxon>
        <taxon>Hominidae</taxon>
        <taxon>Homo</taxon>
    </lineage>
</organism>
<sequence>METDCNPMELSSMSGFEEGSELNGFEGTDMKDMRLEAEAVVNDVLFAVNNMFVSKSLRCADDVAYINVETKERNRYCLELTEAGLKVVGYAFDQVDDHLQTPYHETVYSLLDTLSPAYREAFGNALLQRLEALKRDGQS</sequence>
<name>GSKIP_HUMAN</name>